<proteinExistence type="evidence at protein level"/>
<accession>P25373</accession>
<accession>D6VQY0</accession>
<organism>
    <name type="scientific">Saccharomyces cerevisiae (strain ATCC 204508 / S288c)</name>
    <name type="common">Baker's yeast</name>
    <dbReference type="NCBI Taxonomy" id="559292"/>
    <lineage>
        <taxon>Eukaryota</taxon>
        <taxon>Fungi</taxon>
        <taxon>Dikarya</taxon>
        <taxon>Ascomycota</taxon>
        <taxon>Saccharomycotina</taxon>
        <taxon>Saccharomycetes</taxon>
        <taxon>Saccharomycetales</taxon>
        <taxon>Saccharomycetaceae</taxon>
        <taxon>Saccharomyces</taxon>
    </lineage>
</organism>
<feature type="chain" id="PRO_0000141613" description="Glutaredoxin-1">
    <location>
        <begin position="1"/>
        <end position="110"/>
    </location>
</feature>
<feature type="domain" description="Glutaredoxin" evidence="1">
    <location>
        <begin position="7"/>
        <end position="110"/>
    </location>
</feature>
<feature type="binding site" evidence="7 8">
    <location>
        <begin position="24"/>
        <end position="29"/>
    </location>
    <ligand>
        <name>glutathione</name>
        <dbReference type="ChEBI" id="CHEBI:57925"/>
    </ligand>
</feature>
<feature type="binding site" evidence="7 8">
    <location>
        <position position="63"/>
    </location>
    <ligand>
        <name>glutathione</name>
        <dbReference type="ChEBI" id="CHEBI:57925"/>
    </ligand>
</feature>
<feature type="binding site" evidence="7 8">
    <location>
        <position position="75"/>
    </location>
    <ligand>
        <name>glutathione</name>
        <dbReference type="ChEBI" id="CHEBI:57925"/>
    </ligand>
</feature>
<feature type="binding site" evidence="7 8">
    <location>
        <begin position="88"/>
        <end position="89"/>
    </location>
    <ligand>
        <name>glutathione</name>
        <dbReference type="ChEBI" id="CHEBI:57925"/>
    </ligand>
</feature>
<feature type="modified residue" description="S-glutathionyl cysteine; alternate" evidence="7 8">
    <location>
        <position position="27"/>
    </location>
</feature>
<feature type="disulfide bond" description="Redox-active; alternate" evidence="8">
    <location>
        <begin position="27"/>
        <end position="30"/>
    </location>
</feature>
<feature type="cross-link" description="Glycyl lysine isopeptide (Lys-Gly) (interchain with G-Cter in ubiquitin)" evidence="14">
    <location>
        <position position="11"/>
    </location>
</feature>
<feature type="mutagenesis site" description="Leads to increased oxidoreductase activity." evidence="9">
    <original>C</original>
    <variation>S</variation>
    <location>
        <position position="30"/>
    </location>
</feature>
<feature type="mutagenesis site" description="Leads to increased oxidoreductase activity." evidence="10">
    <original>D</original>
    <variation>S</variation>
    <location>
        <position position="89"/>
    </location>
</feature>
<feature type="helix" evidence="16">
    <location>
        <begin position="4"/>
        <end position="16"/>
    </location>
</feature>
<feature type="strand" evidence="16">
    <location>
        <begin position="18"/>
        <end position="23"/>
    </location>
</feature>
<feature type="helix" evidence="16">
    <location>
        <begin position="28"/>
        <end position="38"/>
    </location>
</feature>
<feature type="turn" evidence="15">
    <location>
        <begin position="39"/>
        <end position="41"/>
    </location>
</feature>
<feature type="helix" evidence="16">
    <location>
        <begin position="45"/>
        <end position="47"/>
    </location>
</feature>
<feature type="strand" evidence="16">
    <location>
        <begin position="48"/>
        <end position="52"/>
    </location>
</feature>
<feature type="helix" evidence="16">
    <location>
        <begin position="53"/>
        <end position="55"/>
    </location>
</feature>
<feature type="helix" evidence="16">
    <location>
        <begin position="59"/>
        <end position="70"/>
    </location>
</feature>
<feature type="strand" evidence="16">
    <location>
        <begin position="77"/>
        <end position="80"/>
    </location>
</feature>
<feature type="strand" evidence="16">
    <location>
        <begin position="83"/>
        <end position="87"/>
    </location>
</feature>
<feature type="helix" evidence="16">
    <location>
        <begin position="88"/>
        <end position="97"/>
    </location>
</feature>
<feature type="helix" evidence="16">
    <location>
        <begin position="99"/>
        <end position="108"/>
    </location>
</feature>
<name>GLRX1_YEAST</name>
<keyword id="KW-0002">3D-structure</keyword>
<keyword id="KW-0963">Cytoplasm</keyword>
<keyword id="KW-1015">Disulfide bond</keyword>
<keyword id="KW-0249">Electron transport</keyword>
<keyword id="KW-0318">Glutathionylation</keyword>
<keyword id="KW-1017">Isopeptide bond</keyword>
<keyword id="KW-0539">Nucleus</keyword>
<keyword id="KW-0560">Oxidoreductase</keyword>
<keyword id="KW-0676">Redox-active center</keyword>
<keyword id="KW-1185">Reference proteome</keyword>
<keyword id="KW-0808">Transferase</keyword>
<keyword id="KW-0813">Transport</keyword>
<keyword id="KW-0832">Ubl conjugation</keyword>
<dbReference type="EC" id="1.11.1.9" evidence="3"/>
<dbReference type="EC" id="2.5.1.18" evidence="4"/>
<dbReference type="EMBL" id="X59720">
    <property type="protein sequence ID" value="CAA42381.1"/>
    <property type="molecule type" value="Genomic_DNA"/>
</dbReference>
<dbReference type="EMBL" id="BK006937">
    <property type="protein sequence ID" value="DAA07449.1"/>
    <property type="molecule type" value="Genomic_DNA"/>
</dbReference>
<dbReference type="PIR" id="S19363">
    <property type="entry name" value="S19363"/>
</dbReference>
<dbReference type="RefSeq" id="NP_009895.1">
    <property type="nucleotide sequence ID" value="NM_001178680.1"/>
</dbReference>
<dbReference type="PDB" id="2JAC">
    <property type="method" value="X-ray"/>
    <property type="resolution" value="2.02 A"/>
    <property type="chains" value="A=1-110"/>
</dbReference>
<dbReference type="PDB" id="2JAD">
    <property type="method" value="X-ray"/>
    <property type="resolution" value="2.70 A"/>
    <property type="chains" value="A=1-110"/>
</dbReference>
<dbReference type="PDB" id="3C1R">
    <property type="method" value="X-ray"/>
    <property type="resolution" value="2.00 A"/>
    <property type="chains" value="A=1-110"/>
</dbReference>
<dbReference type="PDB" id="3C1S">
    <property type="method" value="X-ray"/>
    <property type="resolution" value="2.50 A"/>
    <property type="chains" value="A=1-110"/>
</dbReference>
<dbReference type="PDB" id="6MWS">
    <property type="method" value="X-ray"/>
    <property type="resolution" value="1.22 A"/>
    <property type="chains" value="A=1-110"/>
</dbReference>
<dbReference type="PDBsum" id="2JAC"/>
<dbReference type="PDBsum" id="2JAD"/>
<dbReference type="PDBsum" id="3C1R"/>
<dbReference type="PDBsum" id="3C1S"/>
<dbReference type="PDBsum" id="6MWS"/>
<dbReference type="SMR" id="P25373"/>
<dbReference type="BioGRID" id="30948">
    <property type="interactions" value="72"/>
</dbReference>
<dbReference type="DIP" id="DIP-5646N"/>
<dbReference type="FunCoup" id="P25373">
    <property type="interactions" value="742"/>
</dbReference>
<dbReference type="IntAct" id="P25373">
    <property type="interactions" value="6"/>
</dbReference>
<dbReference type="MINT" id="P25373"/>
<dbReference type="STRING" id="4932.YCL035C"/>
<dbReference type="iPTMnet" id="P25373"/>
<dbReference type="PaxDb" id="4932-YCL035C"/>
<dbReference type="PeptideAtlas" id="P25373"/>
<dbReference type="EnsemblFungi" id="YCL035C_mRNA">
    <property type="protein sequence ID" value="YCL035C"/>
    <property type="gene ID" value="YCL035C"/>
</dbReference>
<dbReference type="GeneID" id="850322"/>
<dbReference type="KEGG" id="sce:YCL035C"/>
<dbReference type="AGR" id="SGD:S000000540"/>
<dbReference type="SGD" id="S000000540">
    <property type="gene designation" value="GRX1"/>
</dbReference>
<dbReference type="VEuPathDB" id="FungiDB:YCL035C"/>
<dbReference type="eggNOG" id="KOG1752">
    <property type="taxonomic scope" value="Eukaryota"/>
</dbReference>
<dbReference type="GeneTree" id="ENSGT00940000162420"/>
<dbReference type="HOGENOM" id="CLU_026126_7_2_1"/>
<dbReference type="InParanoid" id="P25373"/>
<dbReference type="OMA" id="YACYELD"/>
<dbReference type="OrthoDB" id="418495at2759"/>
<dbReference type="SABIO-RK" id="P25373"/>
<dbReference type="BioGRID-ORCS" id="850322">
    <property type="hits" value="0 hits in 10 CRISPR screens"/>
</dbReference>
<dbReference type="EvolutionaryTrace" id="P25373"/>
<dbReference type="PRO" id="PR:P25373"/>
<dbReference type="Proteomes" id="UP000002311">
    <property type="component" value="Chromosome III"/>
</dbReference>
<dbReference type="RNAct" id="P25373">
    <property type="molecule type" value="protein"/>
</dbReference>
<dbReference type="GO" id="GO:0005737">
    <property type="term" value="C:cytoplasm"/>
    <property type="evidence" value="ECO:0007005"/>
    <property type="project" value="SGD"/>
</dbReference>
<dbReference type="GO" id="GO:0005634">
    <property type="term" value="C:nucleus"/>
    <property type="evidence" value="ECO:0007005"/>
    <property type="project" value="SGD"/>
</dbReference>
<dbReference type="GO" id="GO:0015038">
    <property type="term" value="F:glutathione disulfide oxidoreductase activity"/>
    <property type="evidence" value="ECO:0000318"/>
    <property type="project" value="GO_Central"/>
</dbReference>
<dbReference type="GO" id="GO:0004602">
    <property type="term" value="F:glutathione peroxidase activity"/>
    <property type="evidence" value="ECO:0000314"/>
    <property type="project" value="SGD"/>
</dbReference>
<dbReference type="GO" id="GO:0004364">
    <property type="term" value="F:glutathione transferase activity"/>
    <property type="evidence" value="ECO:0000314"/>
    <property type="project" value="SGD"/>
</dbReference>
<dbReference type="GO" id="GO:0034599">
    <property type="term" value="P:cellular response to oxidative stress"/>
    <property type="evidence" value="ECO:0000315"/>
    <property type="project" value="SGD"/>
</dbReference>
<dbReference type="CDD" id="cd03419">
    <property type="entry name" value="GRX_GRXh_1_2_like"/>
    <property type="match status" value="1"/>
</dbReference>
<dbReference type="FunFam" id="3.40.30.10:FF:000026">
    <property type="entry name" value="Glutaredoxin 2"/>
    <property type="match status" value="1"/>
</dbReference>
<dbReference type="Gene3D" id="3.40.30.10">
    <property type="entry name" value="Glutaredoxin"/>
    <property type="match status" value="1"/>
</dbReference>
<dbReference type="InterPro" id="IPR011767">
    <property type="entry name" value="GLR_AS"/>
</dbReference>
<dbReference type="InterPro" id="IPR002109">
    <property type="entry name" value="Glutaredoxin"/>
</dbReference>
<dbReference type="InterPro" id="IPR011899">
    <property type="entry name" value="Glutaredoxin_euk/vir"/>
</dbReference>
<dbReference type="InterPro" id="IPR014025">
    <property type="entry name" value="Glutaredoxin_subgr"/>
</dbReference>
<dbReference type="InterPro" id="IPR036249">
    <property type="entry name" value="Thioredoxin-like_sf"/>
</dbReference>
<dbReference type="NCBIfam" id="TIGR02180">
    <property type="entry name" value="GRX_euk"/>
    <property type="match status" value="1"/>
</dbReference>
<dbReference type="PANTHER" id="PTHR45694">
    <property type="entry name" value="GLUTAREDOXIN 2"/>
    <property type="match status" value="1"/>
</dbReference>
<dbReference type="PANTHER" id="PTHR45694:SF18">
    <property type="entry name" value="GLUTAREDOXIN-1-RELATED"/>
    <property type="match status" value="1"/>
</dbReference>
<dbReference type="Pfam" id="PF00462">
    <property type="entry name" value="Glutaredoxin"/>
    <property type="match status" value="1"/>
</dbReference>
<dbReference type="PRINTS" id="PR00160">
    <property type="entry name" value="GLUTAREDOXIN"/>
</dbReference>
<dbReference type="SUPFAM" id="SSF52833">
    <property type="entry name" value="Thioredoxin-like"/>
    <property type="match status" value="1"/>
</dbReference>
<dbReference type="PROSITE" id="PS00195">
    <property type="entry name" value="GLUTAREDOXIN_1"/>
    <property type="match status" value="1"/>
</dbReference>
<dbReference type="PROSITE" id="PS51354">
    <property type="entry name" value="GLUTAREDOXIN_2"/>
    <property type="match status" value="1"/>
</dbReference>
<evidence type="ECO:0000255" key="1">
    <source>
        <dbReference type="PROSITE-ProRule" id="PRU00686"/>
    </source>
</evidence>
<evidence type="ECO:0000269" key="2">
    <source>
    </source>
</evidence>
<evidence type="ECO:0000269" key="3">
    <source>
    </source>
</evidence>
<evidence type="ECO:0000269" key="4">
    <source>
    </source>
</evidence>
<evidence type="ECO:0000269" key="5">
    <source>
    </source>
</evidence>
<evidence type="ECO:0000269" key="6">
    <source>
    </source>
</evidence>
<evidence type="ECO:0000269" key="7">
    <source>
    </source>
</evidence>
<evidence type="ECO:0000269" key="8">
    <source>
    </source>
</evidence>
<evidence type="ECO:0000269" key="9">
    <source>
    </source>
</evidence>
<evidence type="ECO:0000269" key="10">
    <source>
    </source>
</evidence>
<evidence type="ECO:0000269" key="11">
    <source>
    </source>
</evidence>
<evidence type="ECO:0000303" key="12">
    <source>
    </source>
</evidence>
<evidence type="ECO:0000305" key="13"/>
<evidence type="ECO:0007744" key="14">
    <source>
    </source>
</evidence>
<evidence type="ECO:0007829" key="15">
    <source>
        <dbReference type="PDB" id="2JAD"/>
    </source>
</evidence>
<evidence type="ECO:0007829" key="16">
    <source>
        <dbReference type="PDB" id="6MWS"/>
    </source>
</evidence>
<gene>
    <name type="primary">GRX1</name>
    <name type="ordered locus">YCL035C</name>
    <name type="ORF">YCL35C</name>
</gene>
<sequence>MVSQETIKHVKDLIAENEIFVASKTYCPYCHAALNTLFEKLKVPRSKVLVLQLNDMKEGADIQAALYEINGQRTVPNIYINGKHIGGNDDLQELRETGELEELLEPILAN</sequence>
<protein>
    <recommendedName>
        <fullName evidence="12">Glutaredoxin-1</fullName>
        <ecNumber evidence="3">1.11.1.9</ecNumber>
        <ecNumber evidence="4">2.5.1.18</ecNumber>
    </recommendedName>
    <alternativeName>
        <fullName>Glutathione-dependent oxidoreductase 1</fullName>
    </alternativeName>
</protein>
<reference key="1">
    <citation type="journal article" date="1992" name="Nature">
        <title>The complete DNA sequence of yeast chromosome III.</title>
        <authorList>
            <person name="Oliver S.G."/>
            <person name="van der Aart Q.J.M."/>
            <person name="Agostoni-Carbone M.L."/>
            <person name="Aigle M."/>
            <person name="Alberghina L."/>
            <person name="Alexandraki D."/>
            <person name="Antoine G."/>
            <person name="Anwar R."/>
            <person name="Ballesta J.P.G."/>
            <person name="Benit P."/>
            <person name="Berben G."/>
            <person name="Bergantino E."/>
            <person name="Biteau N."/>
            <person name="Bolle P.-A."/>
            <person name="Bolotin-Fukuhara M."/>
            <person name="Brown A."/>
            <person name="Brown A.J.P."/>
            <person name="Buhler J.-M."/>
            <person name="Carcano C."/>
            <person name="Carignani G."/>
            <person name="Cederberg H."/>
            <person name="Chanet R."/>
            <person name="Contreras R."/>
            <person name="Crouzet M."/>
            <person name="Daignan-Fornier B."/>
            <person name="Defoor E."/>
            <person name="Delgado M.D."/>
            <person name="Demolder J."/>
            <person name="Doira C."/>
            <person name="Dubois E."/>
            <person name="Dujon B."/>
            <person name="Duesterhoeft A."/>
            <person name="Erdmann D."/>
            <person name="Esteban M."/>
            <person name="Fabre F."/>
            <person name="Fairhead C."/>
            <person name="Faye G."/>
            <person name="Feldmann H."/>
            <person name="Fiers W."/>
            <person name="Francingues-Gaillard M.-C."/>
            <person name="Franco L."/>
            <person name="Frontali L."/>
            <person name="Fukuhara H."/>
            <person name="Fuller L.J."/>
            <person name="Galland P."/>
            <person name="Gent M.E."/>
            <person name="Gigot D."/>
            <person name="Gilliquet V."/>
            <person name="Glansdorff N."/>
            <person name="Goffeau A."/>
            <person name="Grenson M."/>
            <person name="Grisanti P."/>
            <person name="Grivell L.A."/>
            <person name="de Haan M."/>
            <person name="Haasemann M."/>
            <person name="Hatat D."/>
            <person name="Hoenicka J."/>
            <person name="Hegemann J.H."/>
            <person name="Herbert C.J."/>
            <person name="Hilger F."/>
            <person name="Hohmann S."/>
            <person name="Hollenberg C.P."/>
            <person name="Huse K."/>
            <person name="Iborra F."/>
            <person name="Indge K.J."/>
            <person name="Isono K."/>
            <person name="Jacq C."/>
            <person name="Jacquet M."/>
            <person name="James C.M."/>
            <person name="Jauniaux J.-C."/>
            <person name="Jia Y."/>
            <person name="Jimenez A."/>
            <person name="Kelly A."/>
            <person name="Kleinhans U."/>
            <person name="Kreisl P."/>
            <person name="Lanfranchi G."/>
            <person name="Lewis C."/>
            <person name="van der Linden C.G."/>
            <person name="Lucchini G."/>
            <person name="Lutzenkirchen K."/>
            <person name="Maat M.J."/>
            <person name="Mallet L."/>
            <person name="Mannhaupt G."/>
            <person name="Martegani E."/>
            <person name="Mathieu A."/>
            <person name="Maurer C.T.C."/>
            <person name="McConnell D."/>
            <person name="McKee R.A."/>
            <person name="Messenguy F."/>
            <person name="Mewes H.-W."/>
            <person name="Molemans F."/>
            <person name="Montague M.A."/>
            <person name="Muzi Falconi M."/>
            <person name="Navas L."/>
            <person name="Newlon C.S."/>
            <person name="Noone D."/>
            <person name="Pallier C."/>
            <person name="Panzeri L."/>
            <person name="Pearson B.M."/>
            <person name="Perea J."/>
            <person name="Philippsen P."/>
            <person name="Pierard A."/>
            <person name="Planta R.J."/>
            <person name="Plevani P."/>
            <person name="Poetsch B."/>
            <person name="Pohl F.M."/>
            <person name="Purnelle B."/>
            <person name="Ramezani Rad M."/>
            <person name="Rasmussen S.W."/>
            <person name="Raynal A."/>
            <person name="Remacha M.A."/>
            <person name="Richterich P."/>
            <person name="Roberts A.B."/>
            <person name="Rodriguez F."/>
            <person name="Sanz E."/>
            <person name="Schaaff-Gerstenschlaeger I."/>
            <person name="Scherens B."/>
            <person name="Schweitzer B."/>
            <person name="Shu Y."/>
            <person name="Skala J."/>
            <person name="Slonimski P.P."/>
            <person name="Sor F."/>
            <person name="Soustelle C."/>
            <person name="Spiegelberg R."/>
            <person name="Stateva L.I."/>
            <person name="Steensma H.Y."/>
            <person name="Steiner S."/>
            <person name="Thierry A."/>
            <person name="Thireos G."/>
            <person name="Tzermia M."/>
            <person name="Urrestarazu L.A."/>
            <person name="Valle G."/>
            <person name="Vetter I."/>
            <person name="van Vliet-Reedijk J.C."/>
            <person name="Voet M."/>
            <person name="Volckaert G."/>
            <person name="Vreken P."/>
            <person name="Wang H."/>
            <person name="Warmington J.R."/>
            <person name="von Wettstein D."/>
            <person name="Wicksteed B.L."/>
            <person name="Wilson C."/>
            <person name="Wurst H."/>
            <person name="Xu G."/>
            <person name="Yoshikawa A."/>
            <person name="Zimmermann F.K."/>
            <person name="Sgouros J.G."/>
        </authorList>
    </citation>
    <scope>NUCLEOTIDE SEQUENCE [LARGE SCALE GENOMIC DNA]</scope>
    <source>
        <strain>ATCC 204508 / S288c</strain>
    </source>
</reference>
<reference key="2">
    <citation type="journal article" date="2014" name="G3 (Bethesda)">
        <title>The reference genome sequence of Saccharomyces cerevisiae: Then and now.</title>
        <authorList>
            <person name="Engel S.R."/>
            <person name="Dietrich F.S."/>
            <person name="Fisk D.G."/>
            <person name="Binkley G."/>
            <person name="Balakrishnan R."/>
            <person name="Costanzo M.C."/>
            <person name="Dwight S.S."/>
            <person name="Hitz B.C."/>
            <person name="Karra K."/>
            <person name="Nash R.S."/>
            <person name="Weng S."/>
            <person name="Wong E.D."/>
            <person name="Lloyd P."/>
            <person name="Skrzypek M.S."/>
            <person name="Miyasato S.R."/>
            <person name="Simison M."/>
            <person name="Cherry J.M."/>
        </authorList>
    </citation>
    <scope>GENOME REANNOTATION</scope>
    <source>
        <strain>ATCC 204508 / S288c</strain>
    </source>
</reference>
<reference key="3">
    <citation type="journal article" date="1998" name="Mol. Biol. Cell">
        <title>The yeast Saccharomyces cerevisiae contains two glutaredoxin genes that are required for protection against reactive oxygen species.</title>
        <authorList>
            <person name="Luikenhuis S."/>
            <person name="Perrone G."/>
            <person name="Dawes I.W."/>
            <person name="Grant C.M."/>
        </authorList>
    </citation>
    <scope>FUNCTION</scope>
    <scope>INDUCTION</scope>
</reference>
<reference key="4">
    <citation type="journal article" date="2000" name="Biochim. Biophys. Acta">
        <title>Differential regulation of glutaredoxin gene expression in response to stress conditions in the yeast Saccharomyces cerevisiae.</title>
        <authorList>
            <person name="Grant C.M."/>
            <person name="Luikenhuis S."/>
            <person name="Beckhouse A."/>
            <person name="Soderbergh M."/>
            <person name="Dawes I.W."/>
        </authorList>
    </citation>
    <scope>INDUCTION</scope>
</reference>
<reference key="5">
    <citation type="journal article" date="2002" name="J. Biol. Chem.">
        <title>The yeast glutaredoxins are active as glutathione peroxidases.</title>
        <authorList>
            <person name="Collinson E.J."/>
            <person name="Wheeler G.L."/>
            <person name="Garrido E.O."/>
            <person name="Avery A.M."/>
            <person name="Avery S.V."/>
            <person name="Grant C.M."/>
        </authorList>
    </citation>
    <scope>FUNCTION</scope>
    <scope>BIOPHYSICOCHEMICAL PROPERTIES</scope>
</reference>
<reference key="6">
    <citation type="journal article" date="2003" name="J. Biol. Chem.">
        <title>Role of yeast glutaredoxins as glutathione S-transferases.</title>
        <authorList>
            <person name="Collinson E.J."/>
            <person name="Grant C.M."/>
        </authorList>
    </citation>
    <scope>FUNCTION</scope>
    <scope>BIOPHYSICOCHEMICAL PROPERTIES</scope>
</reference>
<reference key="7">
    <citation type="journal article" date="2003" name="Nature">
        <title>Global analysis of protein localization in budding yeast.</title>
        <authorList>
            <person name="Huh W.-K."/>
            <person name="Falvo J.V."/>
            <person name="Gerke L.C."/>
            <person name="Carroll A.S."/>
            <person name="Howson R.W."/>
            <person name="Weissman J.S."/>
            <person name="O'Shea E.K."/>
        </authorList>
    </citation>
    <scope>SUBCELLULAR LOCATION [LARGE SCALE ANALYSIS]</scope>
</reference>
<reference key="8">
    <citation type="journal article" date="2003" name="Nature">
        <title>Global analysis of protein expression in yeast.</title>
        <authorList>
            <person name="Ghaemmaghami S."/>
            <person name="Huh W.-K."/>
            <person name="Bower K."/>
            <person name="Howson R.W."/>
            <person name="Belle A."/>
            <person name="Dephoure N."/>
            <person name="O'Shea E.K."/>
            <person name="Weissman J.S."/>
        </authorList>
    </citation>
    <scope>LEVEL OF PROTEIN EXPRESSION [LARGE SCALE ANALYSIS]</scope>
</reference>
<reference key="9">
    <citation type="journal article" date="2009" name="J. Mol. Biol.">
        <title>Structural aspects of the distinct biochemical properties of glutaredoxin 1 and glutaredoxin 2 from Saccharomyces cerevisiae.</title>
        <authorList>
            <person name="Discola K.F."/>
            <person name="de Oliveira M.A."/>
            <person name="Rosa Cussiol J.R."/>
            <person name="Monteiro G."/>
            <person name="Barcena J.A."/>
            <person name="Porras P."/>
            <person name="Padilla C.A."/>
            <person name="Guimaraes B.G."/>
            <person name="Netto L.E."/>
        </authorList>
    </citation>
    <scope>FUNCTION</scope>
    <scope>BIOPHYSICOCHEMICAL PROPERTIES</scope>
    <scope>MUTAGENESIS OF CYS-30</scope>
</reference>
<reference key="10">
    <citation type="journal article" date="2010" name="Biochim. Biophys. Acta">
        <title>Structural basis for the different activities of yeast Grx1 and Grx2.</title>
        <authorList>
            <person name="Li W.F."/>
            <person name="Yu J."/>
            <person name="Ma X.X."/>
            <person name="Teng Y.B."/>
            <person name="Luo M."/>
            <person name="Tang Y.J."/>
            <person name="Zhou C.Z."/>
        </authorList>
    </citation>
    <scope>FUNCTION</scope>
    <scope>BIOPHYSICOCHEMICAL PROPERTIES</scope>
    <scope>MUTAGENESIS OF ASP-89</scope>
</reference>
<reference key="11">
    <citation type="journal article" date="2012" name="Proteomics">
        <title>Sites of ubiquitin attachment in Saccharomyces cerevisiae.</title>
        <authorList>
            <person name="Starita L.M."/>
            <person name="Lo R.S."/>
            <person name="Eng J.K."/>
            <person name="von Haller P.D."/>
            <person name="Fields S."/>
        </authorList>
    </citation>
    <scope>UBIQUITINATION [LARGE SCALE ANALYSIS] AT LYS-11</scope>
    <scope>IDENTIFICATION BY MASS SPECTROMETRY [LARGE SCALE ANALYSIS]</scope>
</reference>
<reference key="12">
    <citation type="journal article" date="2007" name="Acta Crystallogr. D">
        <title>Structure of glutaredoxin Grx1p C30S mutant from yeast.</title>
        <authorList>
            <person name="Hakansson K.O."/>
            <person name="Winther J.R."/>
        </authorList>
    </citation>
    <scope>X-RAY CRYSTALLOGRAPHY (2.02 ANGSTROMS) IN COMPLEX WITH GLUTATHIONE</scope>
    <scope>GLUTATHIONYLATION AT CYS-27</scope>
    <scope>MUTAGENESIS OF CYS-30</scope>
</reference>
<reference key="13">
    <citation type="journal article" date="2008" name="Proteins">
        <title>Glutathionylation-triggered conformational changes of glutaredoxin Grx1 from the yeast Saccharomyces cerevisiae.</title>
        <authorList>
            <person name="Yu J."/>
            <person name="Zhang N.N."/>
            <person name="Yin P.D."/>
            <person name="Cui P.X."/>
            <person name="Zhou C.Z."/>
        </authorList>
    </citation>
    <scope>X-RAY CRYSTALLOGRAPHY (2.00 ANGSTROMS) IN COMPLEX WITH GLUTATHIONE</scope>
    <scope>GLUTATHIONYLATION AT CYS-27</scope>
    <scope>DISULFIDE BOND</scope>
</reference>
<comment type="function">
    <text evidence="3 4 9 10 11">Component of the glutathione system which performs several activities such as glutathione-dependent oxidoreductase, glutathione peroxidase and glutathione S-transferase (GST) activity (PubMed:11875065, PubMed:12684511). The disulfide bond functions as an electron carrier in the glutathione-dependent synthesis of deoxyribonucleotides by the enzyme ribonucleotide reductase. In addition, it is also involved in reducing cytosolic protein- and non-protein-disulfides in a coupled system with glutathione reductase. Required for resistance to reactive oxygen species (ROS) by directly reducing hydroperoxides and for the detoxification of ROS-mediated damage. GRX1 is less active as an oxidoreductase than GRX2 (PubMed:18992757, PubMed:20417731, PubMed:9571241).</text>
</comment>
<comment type="catalytic activity">
    <reaction evidence="3">
        <text>2 glutathione + H2O2 = glutathione disulfide + 2 H2O</text>
        <dbReference type="Rhea" id="RHEA:16833"/>
        <dbReference type="ChEBI" id="CHEBI:15377"/>
        <dbReference type="ChEBI" id="CHEBI:16240"/>
        <dbReference type="ChEBI" id="CHEBI:57925"/>
        <dbReference type="ChEBI" id="CHEBI:58297"/>
        <dbReference type="EC" id="1.11.1.9"/>
    </reaction>
</comment>
<comment type="catalytic activity">
    <reaction evidence="4">
        <text>1-chloro-2,4-dinitrobenzene + glutathione = 2,4-dinitrophenyl-S-glutathione + chloride + H(+)</text>
        <dbReference type="Rhea" id="RHEA:51220"/>
        <dbReference type="ChEBI" id="CHEBI:15378"/>
        <dbReference type="ChEBI" id="CHEBI:17996"/>
        <dbReference type="ChEBI" id="CHEBI:34718"/>
        <dbReference type="ChEBI" id="CHEBI:57925"/>
        <dbReference type="ChEBI" id="CHEBI:133977"/>
        <dbReference type="EC" id="2.5.1.18"/>
    </reaction>
</comment>
<comment type="catalytic activity">
    <reaction evidence="4">
        <text>RX + glutathione = an S-substituted glutathione + a halide anion + H(+)</text>
        <dbReference type="Rhea" id="RHEA:16437"/>
        <dbReference type="ChEBI" id="CHEBI:15378"/>
        <dbReference type="ChEBI" id="CHEBI:16042"/>
        <dbReference type="ChEBI" id="CHEBI:17792"/>
        <dbReference type="ChEBI" id="CHEBI:57925"/>
        <dbReference type="ChEBI" id="CHEBI:90779"/>
        <dbReference type="EC" id="2.5.1.18"/>
    </reaction>
</comment>
<comment type="biophysicochemical properties">
    <kinetics>
        <KM evidence="3">0.88 mM for H(2)O(2)</KM>
        <KM evidence="3">0.52 mM for cumene hydroperoxide</KM>
        <KM evidence="3">0.37 mM for tert-butyl hydroperoxide</KM>
        <KM evidence="4">4.2 mM for 1-chloro-2,4-dinitrobenzene</KM>
        <KM evidence="4">1.3 mM for 1,2-dichloro-4-nitrobenzene</KM>
        <KM evidence="9">6.2 mM for reduced glutathione</KM>
        <Vmax evidence="3">110.0 umol/min/mg enzyme for H(2)O(2)</Vmax>
        <Vmax evidence="3">32.5 umol/min/mg enzyme for cumene hydroperoxide</Vmax>
        <Vmax evidence="3">7.5 umol/min/mg enzyme for tert-butyl hydroperoxide</Vmax>
    </kinetics>
</comment>
<comment type="interaction">
    <interactant intactId="EBI-7903">
        <id>P25373</id>
    </interactant>
    <interactant intactId="EBI-2464632">
        <id>P34230</id>
        <label>PXA2</label>
    </interactant>
    <organismsDiffer>false</organismsDiffer>
    <experiments>2</experiments>
</comment>
<comment type="subcellular location">
    <subcellularLocation>
        <location evidence="5">Cytoplasm</location>
    </subcellularLocation>
    <subcellularLocation>
        <location evidence="5">Nucleus</location>
    </subcellularLocation>
</comment>
<comment type="induction">
    <text evidence="2 11">In response to heat shock and osmotic stress.</text>
</comment>
<comment type="miscellaneous">
    <text evidence="6">Present with 3030 molecules/cell in log phase SD medium.</text>
</comment>
<comment type="similarity">
    <text evidence="13">Belongs to the glutaredoxin family.</text>
</comment>